<feature type="chain" id="PRO_0000089093" description="Actin-related protein 4">
    <location>
        <begin position="1"/>
        <end position="468"/>
    </location>
</feature>
<feature type="region of interest" description="Disordered" evidence="2">
    <location>
        <begin position="262"/>
        <end position="282"/>
    </location>
</feature>
<feature type="region of interest" description="Disordered" evidence="2">
    <location>
        <begin position="321"/>
        <end position="360"/>
    </location>
</feature>
<feature type="compositionally biased region" description="Polar residues" evidence="2">
    <location>
        <begin position="321"/>
        <end position="332"/>
    </location>
</feature>
<proteinExistence type="inferred from homology"/>
<evidence type="ECO:0000250" key="1"/>
<evidence type="ECO:0000256" key="2">
    <source>
        <dbReference type="SAM" id="MobiDB-lite"/>
    </source>
</evidence>
<evidence type="ECO:0000305" key="3"/>
<reference key="1">
    <citation type="journal article" date="2004" name="Proc. Natl. Acad. Sci. U.S.A.">
        <title>The diploid genome sequence of Candida albicans.</title>
        <authorList>
            <person name="Jones T."/>
            <person name="Federspiel N.A."/>
            <person name="Chibana H."/>
            <person name="Dungan J."/>
            <person name="Kalman S."/>
            <person name="Magee B.B."/>
            <person name="Newport G."/>
            <person name="Thorstenson Y.R."/>
            <person name="Agabian N."/>
            <person name="Magee P.T."/>
            <person name="Davis R.W."/>
            <person name="Scherer S."/>
        </authorList>
    </citation>
    <scope>NUCLEOTIDE SEQUENCE [LARGE SCALE GENOMIC DNA]</scope>
    <source>
        <strain>SC5314 / ATCC MYA-2876</strain>
    </source>
</reference>
<reference key="2">
    <citation type="journal article" date="2007" name="Genome Biol.">
        <title>Assembly of the Candida albicans genome into sixteen supercontigs aligned on the eight chromosomes.</title>
        <authorList>
            <person name="van het Hoog M."/>
            <person name="Rast T.J."/>
            <person name="Martchenko M."/>
            <person name="Grindle S."/>
            <person name="Dignard D."/>
            <person name="Hogues H."/>
            <person name="Cuomo C."/>
            <person name="Berriman M."/>
            <person name="Scherer S."/>
            <person name="Magee B.B."/>
            <person name="Whiteway M."/>
            <person name="Chibana H."/>
            <person name="Nantel A."/>
            <person name="Magee P.T."/>
        </authorList>
    </citation>
    <scope>GENOME REANNOTATION</scope>
    <source>
        <strain>SC5314 / ATCC MYA-2876</strain>
    </source>
</reference>
<reference key="3">
    <citation type="journal article" date="2013" name="Genome Biol.">
        <title>Assembly of a phased diploid Candida albicans genome facilitates allele-specific measurements and provides a simple model for repeat and indel structure.</title>
        <authorList>
            <person name="Muzzey D."/>
            <person name="Schwartz K."/>
            <person name="Weissman J.S."/>
            <person name="Sherlock G."/>
        </authorList>
    </citation>
    <scope>NUCLEOTIDE SEQUENCE [LARGE SCALE GENOMIC DNA]</scope>
    <scope>GENOME REANNOTATION</scope>
    <source>
        <strain>SC5314 / ATCC MYA-2876</strain>
    </source>
</reference>
<gene>
    <name type="primary">ARP4</name>
    <name type="ordered locus">CAALFM_C603350CA</name>
    <name type="ORF">CaO19.13069</name>
    <name type="ORF">CaO19.5623</name>
</gene>
<keyword id="KW-0010">Activator</keyword>
<keyword id="KW-0156">Chromatin regulator</keyword>
<keyword id="KW-0227">DNA damage</keyword>
<keyword id="KW-0234">DNA repair</keyword>
<keyword id="KW-0539">Nucleus</keyword>
<keyword id="KW-1185">Reference proteome</keyword>
<keyword id="KW-0804">Transcription</keyword>
<keyword id="KW-0805">Transcription regulation</keyword>
<sequence>MATASTTTVYGGDEINAIVLDPGSYTTRIGYAGDDFPKVITSSYYGQVKNDKKKIFGESINVPRANYDIKPILKESIIVDWDAAIEQYQYYFDQQLKVVGPEQPILITEPIWTETSYRQQLVETFFENFEFSGIYLAKSPTCVSFQQGRSNCLVVDLGHDSVSVTPVIDGICLLKSSMKTNYGGKFLSNEIQDYLIDTKKVVMEPSFKIKSKIPTTYPDPPKYELKNNNTIPTSSSSSLSQSFLEFQNEKIYHNFKEILEVPEKNSSSGTTTTTTTTNKDSSRLFELPTGQSIVIDRFKIAESIFDPTIYKFTNSKLSFPPNNGEISITQANEYRPLKRVRKNDDEEEDSNQSTPKPEVNIRGISQLISHTLSNIDIDLRASLANNIIVTGGVSLISQLTERLYLELSNNNPGLKIRLHAVGNSTERINQAWIGGSVLASLGTFHQMWVTKEEYNEVGVDRILNQRFR</sequence>
<name>ARP4_CANAL</name>
<organism>
    <name type="scientific">Candida albicans (strain SC5314 / ATCC MYA-2876)</name>
    <name type="common">Yeast</name>
    <dbReference type="NCBI Taxonomy" id="237561"/>
    <lineage>
        <taxon>Eukaryota</taxon>
        <taxon>Fungi</taxon>
        <taxon>Dikarya</taxon>
        <taxon>Ascomycota</taxon>
        <taxon>Saccharomycotina</taxon>
        <taxon>Pichiomycetes</taxon>
        <taxon>Debaryomycetaceae</taxon>
        <taxon>Candida/Lodderomyces clade</taxon>
        <taxon>Candida</taxon>
    </lineage>
</organism>
<comment type="function">
    <text evidence="1">Chromatin interaction component of the NuA4 histone acetyltransferase complex which is involved in transcriptional activation of selected genes principally by acetylation of nucleosomal histone H4 and H2A. The NuA4 complex is also involved in DNA repair. Is required for NuA4 complex integrity. Component of the SWR1 complex which mediates the ATP-dependent exchange of histone H2A for the H2A variant HZT1 leading to transcriptional regulation of selected genes by chromatin remodeling. Component of the INO80 complex which remodels chromatin by shifting nucleosomes and is involved in DNA repair (By similarity).</text>
</comment>
<comment type="subunit">
    <text evidence="1">Component of the NuA4 histone acetyltransferase complex, of the INO80 chromatin remodeling complex, and of the SWR1 chromatin remodeling complex.</text>
</comment>
<comment type="subcellular location">
    <subcellularLocation>
        <location evidence="1">Nucleus</location>
    </subcellularLocation>
</comment>
<comment type="similarity">
    <text evidence="3">Belongs to the actin family. ARP4 subfamily.</text>
</comment>
<protein>
    <recommendedName>
        <fullName>Actin-related protein 4</fullName>
    </recommendedName>
    <alternativeName>
        <fullName>Actin-like protein ARP4</fullName>
        <shortName>Actin-like protein 4</shortName>
    </alternativeName>
</protein>
<dbReference type="EMBL" id="CP017628">
    <property type="protein sequence ID" value="AOW30265.1"/>
    <property type="molecule type" value="Genomic_DNA"/>
</dbReference>
<dbReference type="RefSeq" id="XP_719183.2">
    <property type="nucleotide sequence ID" value="XM_714090.2"/>
</dbReference>
<dbReference type="SMR" id="Q5AC48"/>
<dbReference type="FunCoup" id="Q5AC48">
    <property type="interactions" value="372"/>
</dbReference>
<dbReference type="STRING" id="237561.Q5AC48"/>
<dbReference type="EnsemblFungi" id="C6_03350C_A-T">
    <property type="protein sequence ID" value="C6_03350C_A-T-p1"/>
    <property type="gene ID" value="C6_03350C_A"/>
</dbReference>
<dbReference type="GeneID" id="3639201"/>
<dbReference type="KEGG" id="cal:CAALFM_C603350CA"/>
<dbReference type="CGD" id="CAL0000192300">
    <property type="gene designation" value="ARP4"/>
</dbReference>
<dbReference type="VEuPathDB" id="FungiDB:C6_03350C_A"/>
<dbReference type="eggNOG" id="KOG0679">
    <property type="taxonomic scope" value="Eukaryota"/>
</dbReference>
<dbReference type="HOGENOM" id="CLU_027965_6_2_1"/>
<dbReference type="InParanoid" id="Q5AC48"/>
<dbReference type="OrthoDB" id="5132116at2759"/>
<dbReference type="PRO" id="PR:Q5AC48"/>
<dbReference type="Proteomes" id="UP000000559">
    <property type="component" value="Chromosome 6"/>
</dbReference>
<dbReference type="GO" id="GO:0031011">
    <property type="term" value="C:Ino80 complex"/>
    <property type="evidence" value="ECO:0007669"/>
    <property type="project" value="EnsemblFungi"/>
</dbReference>
<dbReference type="GO" id="GO:0035267">
    <property type="term" value="C:NuA4 histone acetyltransferase complex"/>
    <property type="evidence" value="ECO:0000314"/>
    <property type="project" value="CGD"/>
</dbReference>
<dbReference type="GO" id="GO:0016514">
    <property type="term" value="C:SWI/SNF complex"/>
    <property type="evidence" value="ECO:0000318"/>
    <property type="project" value="GO_Central"/>
</dbReference>
<dbReference type="GO" id="GO:0000812">
    <property type="term" value="C:Swr1 complex"/>
    <property type="evidence" value="ECO:0007669"/>
    <property type="project" value="EnsemblFungi"/>
</dbReference>
<dbReference type="GO" id="GO:0005524">
    <property type="term" value="F:ATP binding"/>
    <property type="evidence" value="ECO:0007669"/>
    <property type="project" value="EnsemblFungi"/>
</dbReference>
<dbReference type="GO" id="GO:0003682">
    <property type="term" value="F:chromatin binding"/>
    <property type="evidence" value="ECO:0000318"/>
    <property type="project" value="GO_Central"/>
</dbReference>
<dbReference type="GO" id="GO:0042393">
    <property type="term" value="F:histone binding"/>
    <property type="evidence" value="ECO:0007669"/>
    <property type="project" value="EnsemblFungi"/>
</dbReference>
<dbReference type="GO" id="GO:0006338">
    <property type="term" value="P:chromatin remodeling"/>
    <property type="evidence" value="ECO:0000318"/>
    <property type="project" value="GO_Central"/>
</dbReference>
<dbReference type="GO" id="GO:0006281">
    <property type="term" value="P:DNA repair"/>
    <property type="evidence" value="ECO:0007669"/>
    <property type="project" value="UniProtKB-KW"/>
</dbReference>
<dbReference type="GO" id="GO:0051382">
    <property type="term" value="P:kinetochore assembly"/>
    <property type="evidence" value="ECO:0007669"/>
    <property type="project" value="EnsemblFungi"/>
</dbReference>
<dbReference type="GO" id="GO:0006357">
    <property type="term" value="P:regulation of transcription by RNA polymerase II"/>
    <property type="evidence" value="ECO:0000318"/>
    <property type="project" value="GO_Central"/>
</dbReference>
<dbReference type="CDD" id="cd13395">
    <property type="entry name" value="ASKHA_NBD_Arp4_ACTL6-like"/>
    <property type="match status" value="1"/>
</dbReference>
<dbReference type="FunFam" id="3.30.420.40:FF:000203">
    <property type="entry name" value="Actin-related protein 4"/>
    <property type="match status" value="1"/>
</dbReference>
<dbReference type="FunFam" id="3.90.640.10:FF:000163">
    <property type="entry name" value="Actin-related protein 4"/>
    <property type="match status" value="1"/>
</dbReference>
<dbReference type="FunFam" id="3.30.420.40:FF:000058">
    <property type="entry name" value="Putative actin-related protein 5"/>
    <property type="match status" value="1"/>
</dbReference>
<dbReference type="Gene3D" id="3.30.420.40">
    <property type="match status" value="3"/>
</dbReference>
<dbReference type="Gene3D" id="3.90.640.10">
    <property type="entry name" value="Actin, Chain A, domain 4"/>
    <property type="match status" value="1"/>
</dbReference>
<dbReference type="InterPro" id="IPR004000">
    <property type="entry name" value="Actin"/>
</dbReference>
<dbReference type="InterPro" id="IPR004001">
    <property type="entry name" value="Actin_CS"/>
</dbReference>
<dbReference type="InterPro" id="IPR043129">
    <property type="entry name" value="ATPase_NBD"/>
</dbReference>
<dbReference type="PANTHER" id="PTHR11937">
    <property type="entry name" value="ACTIN"/>
    <property type="match status" value="1"/>
</dbReference>
<dbReference type="Pfam" id="PF00022">
    <property type="entry name" value="Actin"/>
    <property type="match status" value="1"/>
</dbReference>
<dbReference type="SMART" id="SM00268">
    <property type="entry name" value="ACTIN"/>
    <property type="match status" value="1"/>
</dbReference>
<dbReference type="SUPFAM" id="SSF53067">
    <property type="entry name" value="Actin-like ATPase domain"/>
    <property type="match status" value="2"/>
</dbReference>
<dbReference type="PROSITE" id="PS00432">
    <property type="entry name" value="ACTINS_2"/>
    <property type="match status" value="1"/>
</dbReference>
<accession>Q5AC48</accession>
<accession>A0A1D8PQ46</accession>
<accession>Q5ABS7</accession>